<protein>
    <recommendedName>
        <fullName evidence="1">Argininosuccinate lyase</fullName>
        <shortName evidence="1">ASAL</shortName>
        <ecNumber evidence="1">4.3.2.1</ecNumber>
    </recommendedName>
    <alternativeName>
        <fullName evidence="1">Arginosuccinase</fullName>
    </alternativeName>
</protein>
<sequence>MQKLWEGRFSEASSALLEEFNASINFDKKLYKDDIEGSIAHSSMLANCGILSKDEVDKIKNGLNQILNEIESGNFEFKISDEDIHMAIEKRLAEIIGKNTAGRLHTARSRNDQVATDFRHFCMRENLAIAELLRTFVKALVEIAEKNIQTLMPGFTHLQHAQPISLAEHLLAYAFMFKRDFERFISSYERNNFSPLGSAALAGTPHMIDRFETAETLGFKAPMSNSMDGVSDRDFALEILFNISVVFTHTSRLCEELILWNSQEFGFITISDAFSTGSSIMPQKKNPDVAELIRGKTGRIYGNLISLLTTMKGLALAYNKDMQEDKECVFDSVKEVHTSVVILREMLKTAKFNEKNMLKACKKGHLTATDLADYLVREKNIPFRKAHFIVGKCVATAESLGLDLSEMSLENLQKIDGEIDENALKCLDLFNSKNSRKSYGGTADESVRVQIEILKKWLKK</sequence>
<feature type="chain" id="PRO_1000000463" description="Argininosuccinate lyase">
    <location>
        <begin position="1"/>
        <end position="460"/>
    </location>
</feature>
<dbReference type="EC" id="4.3.2.1" evidence="1"/>
<dbReference type="EMBL" id="CP000776">
    <property type="protein sequence ID" value="ABS51041.1"/>
    <property type="molecule type" value="Genomic_DNA"/>
</dbReference>
<dbReference type="RefSeq" id="WP_012109323.1">
    <property type="nucleotide sequence ID" value="NC_009714.1"/>
</dbReference>
<dbReference type="SMR" id="A7I3C8"/>
<dbReference type="STRING" id="360107.CHAB381_1484"/>
<dbReference type="KEGG" id="cha:CHAB381_1484"/>
<dbReference type="eggNOG" id="COG0165">
    <property type="taxonomic scope" value="Bacteria"/>
</dbReference>
<dbReference type="HOGENOM" id="CLU_027272_2_3_7"/>
<dbReference type="OrthoDB" id="9769623at2"/>
<dbReference type="UniPathway" id="UPA00068">
    <property type="reaction ID" value="UER00114"/>
</dbReference>
<dbReference type="Proteomes" id="UP000002407">
    <property type="component" value="Chromosome"/>
</dbReference>
<dbReference type="GO" id="GO:0005829">
    <property type="term" value="C:cytosol"/>
    <property type="evidence" value="ECO:0007669"/>
    <property type="project" value="TreeGrafter"/>
</dbReference>
<dbReference type="GO" id="GO:0004056">
    <property type="term" value="F:argininosuccinate lyase activity"/>
    <property type="evidence" value="ECO:0007669"/>
    <property type="project" value="UniProtKB-UniRule"/>
</dbReference>
<dbReference type="GO" id="GO:0042450">
    <property type="term" value="P:arginine biosynthetic process via ornithine"/>
    <property type="evidence" value="ECO:0007669"/>
    <property type="project" value="InterPro"/>
</dbReference>
<dbReference type="GO" id="GO:0006526">
    <property type="term" value="P:L-arginine biosynthetic process"/>
    <property type="evidence" value="ECO:0007669"/>
    <property type="project" value="UniProtKB-UniRule"/>
</dbReference>
<dbReference type="CDD" id="cd01359">
    <property type="entry name" value="Argininosuccinate_lyase"/>
    <property type="match status" value="1"/>
</dbReference>
<dbReference type="FunFam" id="1.10.275.10:FF:000002">
    <property type="entry name" value="Argininosuccinate lyase"/>
    <property type="match status" value="1"/>
</dbReference>
<dbReference type="FunFam" id="1.10.40.30:FF:000001">
    <property type="entry name" value="Argininosuccinate lyase"/>
    <property type="match status" value="1"/>
</dbReference>
<dbReference type="FunFam" id="1.20.200.10:FF:000015">
    <property type="entry name" value="argininosuccinate lyase isoform X2"/>
    <property type="match status" value="1"/>
</dbReference>
<dbReference type="Gene3D" id="1.10.40.30">
    <property type="entry name" value="Fumarase/aspartase (C-terminal domain)"/>
    <property type="match status" value="1"/>
</dbReference>
<dbReference type="Gene3D" id="1.20.200.10">
    <property type="entry name" value="Fumarase/aspartase (Central domain)"/>
    <property type="match status" value="1"/>
</dbReference>
<dbReference type="Gene3D" id="1.10.275.10">
    <property type="entry name" value="Fumarase/aspartase (N-terminal domain)"/>
    <property type="match status" value="1"/>
</dbReference>
<dbReference type="HAMAP" id="MF_00006">
    <property type="entry name" value="Arg_succ_lyase"/>
    <property type="match status" value="1"/>
</dbReference>
<dbReference type="InterPro" id="IPR029419">
    <property type="entry name" value="Arg_succ_lyase_C"/>
</dbReference>
<dbReference type="InterPro" id="IPR009049">
    <property type="entry name" value="Argininosuccinate_lyase"/>
</dbReference>
<dbReference type="InterPro" id="IPR024083">
    <property type="entry name" value="Fumarase/histidase_N"/>
</dbReference>
<dbReference type="InterPro" id="IPR020557">
    <property type="entry name" value="Fumarate_lyase_CS"/>
</dbReference>
<dbReference type="InterPro" id="IPR000362">
    <property type="entry name" value="Fumarate_lyase_fam"/>
</dbReference>
<dbReference type="InterPro" id="IPR022761">
    <property type="entry name" value="Fumarate_lyase_N"/>
</dbReference>
<dbReference type="InterPro" id="IPR008948">
    <property type="entry name" value="L-Aspartase-like"/>
</dbReference>
<dbReference type="NCBIfam" id="TIGR00838">
    <property type="entry name" value="argH"/>
    <property type="match status" value="1"/>
</dbReference>
<dbReference type="PANTHER" id="PTHR43814">
    <property type="entry name" value="ARGININOSUCCINATE LYASE"/>
    <property type="match status" value="1"/>
</dbReference>
<dbReference type="PANTHER" id="PTHR43814:SF1">
    <property type="entry name" value="ARGININOSUCCINATE LYASE"/>
    <property type="match status" value="1"/>
</dbReference>
<dbReference type="Pfam" id="PF14698">
    <property type="entry name" value="ASL_C2"/>
    <property type="match status" value="1"/>
</dbReference>
<dbReference type="Pfam" id="PF00206">
    <property type="entry name" value="Lyase_1"/>
    <property type="match status" value="1"/>
</dbReference>
<dbReference type="PRINTS" id="PR00145">
    <property type="entry name" value="ARGSUCLYASE"/>
</dbReference>
<dbReference type="PRINTS" id="PR00149">
    <property type="entry name" value="FUMRATELYASE"/>
</dbReference>
<dbReference type="SUPFAM" id="SSF48557">
    <property type="entry name" value="L-aspartase-like"/>
    <property type="match status" value="1"/>
</dbReference>
<dbReference type="PROSITE" id="PS00163">
    <property type="entry name" value="FUMARATE_LYASES"/>
    <property type="match status" value="1"/>
</dbReference>
<evidence type="ECO:0000255" key="1">
    <source>
        <dbReference type="HAMAP-Rule" id="MF_00006"/>
    </source>
</evidence>
<gene>
    <name evidence="1" type="primary">argH</name>
    <name type="ordered locus">CHAB381_1484</name>
</gene>
<organism>
    <name type="scientific">Campylobacter hominis (strain ATCC BAA-381 / DSM 21671 / CCUG 45161 / LMG 19568 / NCTC 13146 / CH001A)</name>
    <dbReference type="NCBI Taxonomy" id="360107"/>
    <lineage>
        <taxon>Bacteria</taxon>
        <taxon>Pseudomonadati</taxon>
        <taxon>Campylobacterota</taxon>
        <taxon>Epsilonproteobacteria</taxon>
        <taxon>Campylobacterales</taxon>
        <taxon>Campylobacteraceae</taxon>
        <taxon>Campylobacter</taxon>
    </lineage>
</organism>
<reference key="1">
    <citation type="submission" date="2007-07" db="EMBL/GenBank/DDBJ databases">
        <title>Complete genome sequence of Campylobacter hominis ATCC BAA-381, a commensal isolated from the human gastrointestinal tract.</title>
        <authorList>
            <person name="Fouts D.E."/>
            <person name="Mongodin E.F."/>
            <person name="Puiu D."/>
            <person name="Sebastian Y."/>
            <person name="Miller W.G."/>
            <person name="Mandrell R.E."/>
            <person name="Nelson K.E."/>
        </authorList>
    </citation>
    <scope>NUCLEOTIDE SEQUENCE [LARGE SCALE GENOMIC DNA]</scope>
    <source>
        <strain>ATCC BAA-381 / DSM 21671 / CCUG 45161 / LMG 19568 / NCTC 13146 / CH001A</strain>
    </source>
</reference>
<name>ARLY_CAMHC</name>
<accession>A7I3C8</accession>
<comment type="catalytic activity">
    <reaction evidence="1">
        <text>2-(N(omega)-L-arginino)succinate = fumarate + L-arginine</text>
        <dbReference type="Rhea" id="RHEA:24020"/>
        <dbReference type="ChEBI" id="CHEBI:29806"/>
        <dbReference type="ChEBI" id="CHEBI:32682"/>
        <dbReference type="ChEBI" id="CHEBI:57472"/>
        <dbReference type="EC" id="4.3.2.1"/>
    </reaction>
</comment>
<comment type="pathway">
    <text evidence="1">Amino-acid biosynthesis; L-arginine biosynthesis; L-arginine from L-ornithine and carbamoyl phosphate: step 3/3.</text>
</comment>
<comment type="subcellular location">
    <subcellularLocation>
        <location evidence="1">Cytoplasm</location>
    </subcellularLocation>
</comment>
<comment type="similarity">
    <text evidence="1">Belongs to the lyase 1 family. Argininosuccinate lyase subfamily.</text>
</comment>
<keyword id="KW-0028">Amino-acid biosynthesis</keyword>
<keyword id="KW-0055">Arginine biosynthesis</keyword>
<keyword id="KW-0963">Cytoplasm</keyword>
<keyword id="KW-0456">Lyase</keyword>
<keyword id="KW-1185">Reference proteome</keyword>
<proteinExistence type="inferred from homology"/>